<proteinExistence type="inferred from homology"/>
<evidence type="ECO:0000255" key="1">
    <source>
        <dbReference type="HAMAP-Rule" id="MF_00074"/>
    </source>
</evidence>
<protein>
    <recommendedName>
        <fullName evidence="1">Ribosomal RNA small subunit methyltransferase G</fullName>
        <ecNumber evidence="1">2.1.1.170</ecNumber>
    </recommendedName>
    <alternativeName>
        <fullName evidence="1">16S rRNA 7-methylguanosine methyltransferase</fullName>
        <shortName evidence="1">16S rRNA m7G methyltransferase</shortName>
    </alternativeName>
</protein>
<reference key="1">
    <citation type="journal article" date="2004" name="Nat. Genet.">
        <title>Comparison of genome degradation in Paratyphi A and Typhi, human-restricted serovars of Salmonella enterica that cause typhoid.</title>
        <authorList>
            <person name="McClelland M."/>
            <person name="Sanderson K.E."/>
            <person name="Clifton S.W."/>
            <person name="Latreille P."/>
            <person name="Porwollik S."/>
            <person name="Sabo A."/>
            <person name="Meyer R."/>
            <person name="Bieri T."/>
            <person name="Ozersky P."/>
            <person name="McLellan M."/>
            <person name="Harkins C.R."/>
            <person name="Wang C."/>
            <person name="Nguyen C."/>
            <person name="Berghoff A."/>
            <person name="Elliott G."/>
            <person name="Kohlberg S."/>
            <person name="Strong C."/>
            <person name="Du F."/>
            <person name="Carter J."/>
            <person name="Kremizki C."/>
            <person name="Layman D."/>
            <person name="Leonard S."/>
            <person name="Sun H."/>
            <person name="Fulton L."/>
            <person name="Nash W."/>
            <person name="Miner T."/>
            <person name="Minx P."/>
            <person name="Delehaunty K."/>
            <person name="Fronick C."/>
            <person name="Magrini V."/>
            <person name="Nhan M."/>
            <person name="Warren W."/>
            <person name="Florea L."/>
            <person name="Spieth J."/>
            <person name="Wilson R.K."/>
        </authorList>
    </citation>
    <scope>NUCLEOTIDE SEQUENCE [LARGE SCALE GENOMIC DNA]</scope>
    <source>
        <strain>ATCC 9150 / SARB42</strain>
    </source>
</reference>
<accession>Q5PJX2</accession>
<gene>
    <name evidence="1" type="primary">rsmG</name>
    <name type="ordered locus">SPA3712</name>
</gene>
<organism>
    <name type="scientific">Salmonella paratyphi A (strain ATCC 9150 / SARB42)</name>
    <dbReference type="NCBI Taxonomy" id="295319"/>
    <lineage>
        <taxon>Bacteria</taxon>
        <taxon>Pseudomonadati</taxon>
        <taxon>Pseudomonadota</taxon>
        <taxon>Gammaproteobacteria</taxon>
        <taxon>Enterobacterales</taxon>
        <taxon>Enterobacteriaceae</taxon>
        <taxon>Salmonella</taxon>
    </lineage>
</organism>
<dbReference type="EC" id="2.1.1.170" evidence="1"/>
<dbReference type="EMBL" id="CP000026">
    <property type="protein sequence ID" value="AAV79504.1"/>
    <property type="molecule type" value="Genomic_DNA"/>
</dbReference>
<dbReference type="RefSeq" id="WP_001519938.1">
    <property type="nucleotide sequence ID" value="NC_006511.1"/>
</dbReference>
<dbReference type="SMR" id="Q5PJX2"/>
<dbReference type="KEGG" id="spt:SPA3712"/>
<dbReference type="HOGENOM" id="CLU_065341_2_2_6"/>
<dbReference type="Proteomes" id="UP000008185">
    <property type="component" value="Chromosome"/>
</dbReference>
<dbReference type="GO" id="GO:0005829">
    <property type="term" value="C:cytosol"/>
    <property type="evidence" value="ECO:0007669"/>
    <property type="project" value="TreeGrafter"/>
</dbReference>
<dbReference type="GO" id="GO:0070043">
    <property type="term" value="F:rRNA (guanine-N7-)-methyltransferase activity"/>
    <property type="evidence" value="ECO:0007669"/>
    <property type="project" value="UniProtKB-UniRule"/>
</dbReference>
<dbReference type="CDD" id="cd02440">
    <property type="entry name" value="AdoMet_MTases"/>
    <property type="match status" value="1"/>
</dbReference>
<dbReference type="FunFam" id="3.40.50.150:FF:000032">
    <property type="entry name" value="Ribosomal RNA small subunit methyltransferase G"/>
    <property type="match status" value="1"/>
</dbReference>
<dbReference type="Gene3D" id="3.40.50.150">
    <property type="entry name" value="Vaccinia Virus protein VP39"/>
    <property type="match status" value="1"/>
</dbReference>
<dbReference type="HAMAP" id="MF_00074">
    <property type="entry name" value="16SrRNA_methyltr_G"/>
    <property type="match status" value="1"/>
</dbReference>
<dbReference type="InterPro" id="IPR003682">
    <property type="entry name" value="rRNA_ssu_MeTfrase_G"/>
</dbReference>
<dbReference type="InterPro" id="IPR029063">
    <property type="entry name" value="SAM-dependent_MTases_sf"/>
</dbReference>
<dbReference type="NCBIfam" id="TIGR00138">
    <property type="entry name" value="rsmG_gidB"/>
    <property type="match status" value="1"/>
</dbReference>
<dbReference type="PANTHER" id="PTHR31760">
    <property type="entry name" value="S-ADENOSYL-L-METHIONINE-DEPENDENT METHYLTRANSFERASES SUPERFAMILY PROTEIN"/>
    <property type="match status" value="1"/>
</dbReference>
<dbReference type="PANTHER" id="PTHR31760:SF0">
    <property type="entry name" value="S-ADENOSYL-L-METHIONINE-DEPENDENT METHYLTRANSFERASES SUPERFAMILY PROTEIN"/>
    <property type="match status" value="1"/>
</dbReference>
<dbReference type="Pfam" id="PF02527">
    <property type="entry name" value="GidB"/>
    <property type="match status" value="1"/>
</dbReference>
<dbReference type="PIRSF" id="PIRSF003078">
    <property type="entry name" value="GidB"/>
    <property type="match status" value="1"/>
</dbReference>
<dbReference type="SUPFAM" id="SSF53335">
    <property type="entry name" value="S-adenosyl-L-methionine-dependent methyltransferases"/>
    <property type="match status" value="1"/>
</dbReference>
<sequence length="207" mass="23175">MLNKLSRLLADAGISLTDHQKTLLVAYVDMLHKWNKAYNLTSVRDPNEMLVRHILDSIVVAPYLQGQRFIDVGTGPGLPGIPLAIVLPDAHFTLLDSLGKRVRFLRQVQHELKLENITPVQSRVEAYPSEPPFDGVISRAFASLNDMVSWCHHLPGEKGRFYALKGQLPGDEIASLPDNFSVESVEKLRVPQLEGERHLVIIKSNKV</sequence>
<keyword id="KW-0963">Cytoplasm</keyword>
<keyword id="KW-0489">Methyltransferase</keyword>
<keyword id="KW-0698">rRNA processing</keyword>
<keyword id="KW-0949">S-adenosyl-L-methionine</keyword>
<keyword id="KW-0808">Transferase</keyword>
<feature type="chain" id="PRO_0000184322" description="Ribosomal RNA small subunit methyltransferase G">
    <location>
        <begin position="1"/>
        <end position="207"/>
    </location>
</feature>
<feature type="binding site" evidence="1">
    <location>
        <position position="73"/>
    </location>
    <ligand>
        <name>S-adenosyl-L-methionine</name>
        <dbReference type="ChEBI" id="CHEBI:59789"/>
    </ligand>
</feature>
<feature type="binding site" evidence="1">
    <location>
        <position position="78"/>
    </location>
    <ligand>
        <name>S-adenosyl-L-methionine</name>
        <dbReference type="ChEBI" id="CHEBI:59789"/>
    </ligand>
</feature>
<feature type="binding site" evidence="1">
    <location>
        <begin position="124"/>
        <end position="125"/>
    </location>
    <ligand>
        <name>S-adenosyl-L-methionine</name>
        <dbReference type="ChEBI" id="CHEBI:59789"/>
    </ligand>
</feature>
<feature type="binding site" evidence="1">
    <location>
        <position position="139"/>
    </location>
    <ligand>
        <name>S-adenosyl-L-methionine</name>
        <dbReference type="ChEBI" id="CHEBI:59789"/>
    </ligand>
</feature>
<name>RSMG_SALPA</name>
<comment type="function">
    <text evidence="1">Specifically methylates the N7 position of guanine in position 527 of 16S rRNA.</text>
</comment>
<comment type="catalytic activity">
    <reaction evidence="1">
        <text>guanosine(527) in 16S rRNA + S-adenosyl-L-methionine = N(7)-methylguanosine(527) in 16S rRNA + S-adenosyl-L-homocysteine</text>
        <dbReference type="Rhea" id="RHEA:42732"/>
        <dbReference type="Rhea" id="RHEA-COMP:10209"/>
        <dbReference type="Rhea" id="RHEA-COMP:10210"/>
        <dbReference type="ChEBI" id="CHEBI:57856"/>
        <dbReference type="ChEBI" id="CHEBI:59789"/>
        <dbReference type="ChEBI" id="CHEBI:74269"/>
        <dbReference type="ChEBI" id="CHEBI:74480"/>
        <dbReference type="EC" id="2.1.1.170"/>
    </reaction>
</comment>
<comment type="subcellular location">
    <subcellularLocation>
        <location evidence="1">Cytoplasm</location>
    </subcellularLocation>
</comment>
<comment type="similarity">
    <text evidence="1">Belongs to the methyltransferase superfamily. RNA methyltransferase RsmG family.</text>
</comment>